<organism>
    <name type="scientific">Emericella nidulans</name>
    <name type="common">Aspergillus nidulans</name>
    <dbReference type="NCBI Taxonomy" id="162425"/>
    <lineage>
        <taxon>Eukaryota</taxon>
        <taxon>Fungi</taxon>
        <taxon>Dikarya</taxon>
        <taxon>Ascomycota</taxon>
        <taxon>Pezizomycotina</taxon>
        <taxon>Eurotiomycetes</taxon>
        <taxon>Eurotiomycetidae</taxon>
        <taxon>Eurotiales</taxon>
        <taxon>Aspergillaceae</taxon>
        <taxon>Aspergillus</taxon>
        <taxon>Aspergillus subgen. Nidulantes</taxon>
    </lineage>
</organism>
<keyword id="KW-0249">Electron transport</keyword>
<keyword id="KW-0349">Heme</keyword>
<keyword id="KW-0408">Iron</keyword>
<keyword id="KW-0472">Membrane</keyword>
<keyword id="KW-0479">Metal-binding</keyword>
<keyword id="KW-0496">Mitochondrion</keyword>
<keyword id="KW-0999">Mitochondrion inner membrane</keyword>
<keyword id="KW-0679">Respiratory chain</keyword>
<keyword id="KW-0812">Transmembrane</keyword>
<keyword id="KW-1133">Transmembrane helix</keyword>
<keyword id="KW-0813">Transport</keyword>
<keyword id="KW-0830">Ubiquinone</keyword>
<name>CYB_EMEND</name>
<reference key="1">
    <citation type="journal article" date="1981" name="Cell">
        <title>The mosaic organization of the apocytochrome b gene of Aspergillus nidulans revealed by DNA sequencing.</title>
        <authorList>
            <person name="Waring R.B."/>
            <person name="Davies R.W."/>
            <person name="Lee S."/>
            <person name="Grisi E."/>
            <person name="Berks M.M."/>
            <person name="Scazzocchio C."/>
        </authorList>
    </citation>
    <scope>NUCLEOTIDE SEQUENCE [GENOMIC DNA]</scope>
    <source>
        <strain>yA2 pyroA4 cnxC3</strain>
    </source>
</reference>
<reference key="2">
    <citation type="journal article" date="1998" name="Med. Mycol.">
        <title>The identification and phylogenetic relationship of pathogenic species of Aspergillus based on the mitochondrial cytochrome b gene.</title>
        <authorList>
            <person name="Wang L."/>
            <person name="Yokoyama K."/>
            <person name="Miyaji M."/>
            <person name="Nishimura K."/>
        </authorList>
    </citation>
    <scope>NUCLEOTIDE SEQUENCE [GENOMIC DNA] OF 142-286</scope>
    <source>
        <strain>IFM 41094</strain>
        <strain>IFM 41395</strain>
        <strain>IFM 46999</strain>
        <strain>IFM 47004</strain>
        <strain>IFM 47006</strain>
    </source>
</reference>
<comment type="function">
    <text evidence="3">Component of the ubiquinol-cytochrome c reductase complex (complex III or cytochrome b-c1 complex) that is part of the mitochondrial respiratory chain. The b-c1 complex mediates electron transfer from ubiquinol to cytochrome c. Contributes to the generation of a proton gradient across the mitochondrial membrane that is then used for ATP synthesis.</text>
</comment>
<comment type="cofactor">
    <cofactor evidence="3">
        <name>heme b</name>
        <dbReference type="ChEBI" id="CHEBI:60344"/>
    </cofactor>
    <text evidence="3">Binds 2 heme b groups non-covalently.</text>
</comment>
<comment type="subunit">
    <text evidence="3">Fungal cytochrome b-c1 complex contains 10 subunits; 3 respiratory subunits, 2 core proteins and 5 low-molecular weight proteins. Cytochrome b-c1 complex is a homodimer.</text>
</comment>
<comment type="subcellular location">
    <subcellularLocation>
        <location evidence="3">Mitochondrion inner membrane</location>
        <topology evidence="3">Multi-pass membrane protein</topology>
    </subcellularLocation>
</comment>
<comment type="miscellaneous">
    <text evidence="1">Heme 1 (or BL or b562) is low-potential and absorbs at about 562 nm, and heme 2 (or BH or b566) is high-potential and absorbs at about 566 nm.</text>
</comment>
<comment type="similarity">
    <text evidence="4 5">Belongs to the cytochrome b family.</text>
</comment>
<comment type="caution">
    <text evidence="3">The protein contains only eight transmembrane helices, not nine as predicted by bioinformatics tools.</text>
</comment>
<proteinExistence type="inferred from homology"/>
<dbReference type="EMBL" id="AH001255">
    <property type="protein sequence ID" value="AAA31737.1"/>
    <property type="molecule type" value="Genomic_DNA"/>
</dbReference>
<dbReference type="EMBL" id="AB000580">
    <property type="protein sequence ID" value="BAA34147.1"/>
    <property type="molecule type" value="Genomic_DNA"/>
</dbReference>
<dbReference type="EMBL" id="AB000581">
    <property type="protein sequence ID" value="BAA34148.1"/>
    <property type="molecule type" value="Genomic_DNA"/>
</dbReference>
<dbReference type="EMBL" id="AB000582">
    <property type="protein sequence ID" value="BAA34149.1"/>
    <property type="molecule type" value="Genomic_DNA"/>
</dbReference>
<dbReference type="EMBL" id="AB000598">
    <property type="protein sequence ID" value="BAA34163.2"/>
    <property type="molecule type" value="Genomic_DNA"/>
</dbReference>
<dbReference type="EMBL" id="AB000599">
    <property type="protein sequence ID" value="BAA34164.2"/>
    <property type="molecule type" value="Genomic_DNA"/>
</dbReference>
<dbReference type="PIR" id="A00157">
    <property type="entry name" value="CBASN"/>
</dbReference>
<dbReference type="SMR" id="P00161"/>
<dbReference type="GO" id="GO:0005743">
    <property type="term" value="C:mitochondrial inner membrane"/>
    <property type="evidence" value="ECO:0007669"/>
    <property type="project" value="UniProtKB-SubCell"/>
</dbReference>
<dbReference type="GO" id="GO:0045275">
    <property type="term" value="C:respiratory chain complex III"/>
    <property type="evidence" value="ECO:0007669"/>
    <property type="project" value="InterPro"/>
</dbReference>
<dbReference type="GO" id="GO:0046872">
    <property type="term" value="F:metal ion binding"/>
    <property type="evidence" value="ECO:0007669"/>
    <property type="project" value="UniProtKB-KW"/>
</dbReference>
<dbReference type="GO" id="GO:0008121">
    <property type="term" value="F:ubiquinol-cytochrome-c reductase activity"/>
    <property type="evidence" value="ECO:0007669"/>
    <property type="project" value="InterPro"/>
</dbReference>
<dbReference type="GO" id="GO:0006122">
    <property type="term" value="P:mitochondrial electron transport, ubiquinol to cytochrome c"/>
    <property type="evidence" value="ECO:0007669"/>
    <property type="project" value="TreeGrafter"/>
</dbReference>
<dbReference type="CDD" id="cd00290">
    <property type="entry name" value="cytochrome_b_C"/>
    <property type="match status" value="1"/>
</dbReference>
<dbReference type="CDD" id="cd00284">
    <property type="entry name" value="Cytochrome_b_N"/>
    <property type="match status" value="1"/>
</dbReference>
<dbReference type="FunFam" id="1.20.810.10:FF:000002">
    <property type="entry name" value="Cytochrome b"/>
    <property type="match status" value="1"/>
</dbReference>
<dbReference type="Gene3D" id="1.20.810.10">
    <property type="entry name" value="Cytochrome Bc1 Complex, Chain C"/>
    <property type="match status" value="1"/>
</dbReference>
<dbReference type="InterPro" id="IPR005798">
    <property type="entry name" value="Cyt_b/b6_C"/>
</dbReference>
<dbReference type="InterPro" id="IPR036150">
    <property type="entry name" value="Cyt_b/b6_C_sf"/>
</dbReference>
<dbReference type="InterPro" id="IPR005797">
    <property type="entry name" value="Cyt_b/b6_N"/>
</dbReference>
<dbReference type="InterPro" id="IPR027387">
    <property type="entry name" value="Cytb/b6-like_sf"/>
</dbReference>
<dbReference type="InterPro" id="IPR030689">
    <property type="entry name" value="Cytochrome_b"/>
</dbReference>
<dbReference type="InterPro" id="IPR048260">
    <property type="entry name" value="Cytochrome_b_C_euk/bac"/>
</dbReference>
<dbReference type="InterPro" id="IPR048259">
    <property type="entry name" value="Cytochrome_b_N_euk/bac"/>
</dbReference>
<dbReference type="InterPro" id="IPR016174">
    <property type="entry name" value="Di-haem_cyt_TM"/>
</dbReference>
<dbReference type="PANTHER" id="PTHR19271">
    <property type="entry name" value="CYTOCHROME B"/>
    <property type="match status" value="1"/>
</dbReference>
<dbReference type="PANTHER" id="PTHR19271:SF16">
    <property type="entry name" value="CYTOCHROME B"/>
    <property type="match status" value="1"/>
</dbReference>
<dbReference type="Pfam" id="PF00032">
    <property type="entry name" value="Cytochrom_B_C"/>
    <property type="match status" value="1"/>
</dbReference>
<dbReference type="Pfam" id="PF00033">
    <property type="entry name" value="Cytochrome_B"/>
    <property type="match status" value="1"/>
</dbReference>
<dbReference type="PIRSF" id="PIRSF038885">
    <property type="entry name" value="COB"/>
    <property type="match status" value="1"/>
</dbReference>
<dbReference type="SUPFAM" id="SSF81648">
    <property type="entry name" value="a domain/subunit of cytochrome bc1 complex (Ubiquinol-cytochrome c reductase)"/>
    <property type="match status" value="1"/>
</dbReference>
<dbReference type="SUPFAM" id="SSF81342">
    <property type="entry name" value="Transmembrane di-heme cytochromes"/>
    <property type="match status" value="1"/>
</dbReference>
<dbReference type="PROSITE" id="PS51003">
    <property type="entry name" value="CYTB_CTER"/>
    <property type="match status" value="1"/>
</dbReference>
<dbReference type="PROSITE" id="PS51002">
    <property type="entry name" value="CYTB_NTER"/>
    <property type="match status" value="1"/>
</dbReference>
<geneLocation type="mitochondrion"/>
<protein>
    <recommendedName>
        <fullName>Cytochrome b</fullName>
    </recommendedName>
    <alternativeName>
        <fullName>Complex III subunit 3</fullName>
    </alternativeName>
    <alternativeName>
        <fullName>Complex III subunit III</fullName>
    </alternativeName>
    <alternativeName>
        <fullName>Cytochrome b-c1 complex subunit 3</fullName>
    </alternativeName>
    <alternativeName>
        <fullName>Ubiquinol-cytochrome-c reductase complex cytochrome b subunit</fullName>
    </alternativeName>
</protein>
<accession>P00161</accession>
<feature type="chain" id="PRO_0000061743" description="Cytochrome b">
    <location>
        <begin position="1"/>
        <end position="387"/>
    </location>
</feature>
<feature type="transmembrane region" description="Helical" evidence="3">
    <location>
        <begin position="32"/>
        <end position="52"/>
    </location>
</feature>
<feature type="transmembrane region" description="Helical" evidence="3">
    <location>
        <begin position="76"/>
        <end position="98"/>
    </location>
</feature>
<feature type="transmembrane region" description="Helical" evidence="3">
    <location>
        <begin position="113"/>
        <end position="133"/>
    </location>
</feature>
<feature type="transmembrane region" description="Helical" evidence="3">
    <location>
        <begin position="179"/>
        <end position="199"/>
    </location>
</feature>
<feature type="transmembrane region" description="Helical" evidence="3">
    <location>
        <begin position="226"/>
        <end position="246"/>
    </location>
</feature>
<feature type="transmembrane region" description="Helical" evidence="3">
    <location>
        <begin position="290"/>
        <end position="310"/>
    </location>
</feature>
<feature type="transmembrane region" description="Helical" evidence="3">
    <location>
        <begin position="322"/>
        <end position="342"/>
    </location>
</feature>
<feature type="transmembrane region" description="Helical" evidence="3">
    <location>
        <begin position="349"/>
        <end position="369"/>
    </location>
</feature>
<feature type="binding site" description="axial binding residue" evidence="5">
    <location>
        <position position="82"/>
    </location>
    <ligand>
        <name>heme b</name>
        <dbReference type="ChEBI" id="CHEBI:60344"/>
        <label>b562</label>
    </ligand>
    <ligandPart>
        <name>Fe</name>
        <dbReference type="ChEBI" id="CHEBI:18248"/>
    </ligandPart>
</feature>
<feature type="binding site" description="axial binding residue" evidence="5">
    <location>
        <position position="96"/>
    </location>
    <ligand>
        <name>heme b</name>
        <dbReference type="ChEBI" id="CHEBI:60344"/>
        <label>b566</label>
    </ligand>
    <ligandPart>
        <name>Fe</name>
        <dbReference type="ChEBI" id="CHEBI:18248"/>
    </ligandPart>
</feature>
<feature type="binding site" description="axial binding residue" evidence="5">
    <location>
        <position position="183"/>
    </location>
    <ligand>
        <name>heme b</name>
        <dbReference type="ChEBI" id="CHEBI:60344"/>
        <label>b562</label>
    </ligand>
    <ligandPart>
        <name>Fe</name>
        <dbReference type="ChEBI" id="CHEBI:18248"/>
    </ligandPart>
</feature>
<feature type="binding site" description="axial binding residue" evidence="5">
    <location>
        <position position="197"/>
    </location>
    <ligand>
        <name>heme b</name>
        <dbReference type="ChEBI" id="CHEBI:60344"/>
        <label>b566</label>
    </ligand>
    <ligandPart>
        <name>Fe</name>
        <dbReference type="ChEBI" id="CHEBI:18248"/>
    </ligandPart>
</feature>
<feature type="binding site" evidence="2">
    <location>
        <position position="202"/>
    </location>
    <ligand>
        <name>a ubiquinone</name>
        <dbReference type="ChEBI" id="CHEBI:16389"/>
    </ligand>
</feature>
<evidence type="ECO:0000250" key="1"/>
<evidence type="ECO:0000250" key="2">
    <source>
        <dbReference type="UniProtKB" id="P00157"/>
    </source>
</evidence>
<evidence type="ECO:0000250" key="3">
    <source>
        <dbReference type="UniProtKB" id="P00163"/>
    </source>
</evidence>
<evidence type="ECO:0000255" key="4">
    <source>
        <dbReference type="PROSITE-ProRule" id="PRU00967"/>
    </source>
</evidence>
<evidence type="ECO:0000255" key="5">
    <source>
        <dbReference type="PROSITE-ProRule" id="PRU00968"/>
    </source>
</evidence>
<sequence>MRILKSHPLLKIVNSYIIDSPQPANLSYLWNFGSLLALCLGIQIVTGVTLAMHYTPSVSEAFNSVEHIMRDVNNGWLVRYLHSNTASAFFFLVYLHIGRGLYYGSYKTPRTLTWAIGTVILIVMMATAFLGYVLPYGQMSLWGATVITNLMSAIPWIGQDIVEFIWGGFSVNNATLNRFFALHFLLPFVLAALALMHLIAMHDTVGSGNPLGISANYDRLPFAPYFIFKDLITIFIFFIVLSIFVFFMPNALGDSENYVMANPMQTPPAIVPEWYLLPFYAILRSIPNKLLGVIAMFAAILALMVMPITDLSKLRGVQFRPLSKVVFYIFVANFLILMQIGAKHVETPFIEFGQISTIIYFAYFFVIVPVVSLIENTLVELGTKKNF</sequence>
<gene>
    <name type="primary">cob</name>
    <name type="synonym">cobA</name>
    <name type="synonym">cytB</name>
</gene>